<protein>
    <recommendedName>
        <fullName evidence="1">DNA-directed RNA polymerase subunit beta</fullName>
        <shortName evidence="1">RNAP subunit beta</shortName>
        <ecNumber evidence="1">2.7.7.6</ecNumber>
    </recommendedName>
    <alternativeName>
        <fullName evidence="1">RNA polymerase subunit beta</fullName>
    </alternativeName>
    <alternativeName>
        <fullName evidence="1">Transcriptase subunit beta</fullName>
    </alternativeName>
</protein>
<feature type="chain" id="PRO_0000047871" description="DNA-directed RNA polymerase subunit beta">
    <location>
        <begin position="1"/>
        <end position="1377"/>
    </location>
</feature>
<keyword id="KW-0240">DNA-directed RNA polymerase</keyword>
<keyword id="KW-0548">Nucleotidyltransferase</keyword>
<keyword id="KW-0804">Transcription</keyword>
<keyword id="KW-0808">Transferase</keyword>
<organism>
    <name type="scientific">Brucella suis biovar 1 (strain 1330)</name>
    <dbReference type="NCBI Taxonomy" id="204722"/>
    <lineage>
        <taxon>Bacteria</taxon>
        <taxon>Pseudomonadati</taxon>
        <taxon>Pseudomonadota</taxon>
        <taxon>Alphaproteobacteria</taxon>
        <taxon>Hyphomicrobiales</taxon>
        <taxon>Brucellaceae</taxon>
        <taxon>Brucella/Ochrobactrum group</taxon>
        <taxon>Brucella</taxon>
    </lineage>
</organism>
<proteinExistence type="inferred from homology"/>
<gene>
    <name evidence="1" type="primary">rpoB</name>
    <name type="ordered locus">BR1243</name>
    <name type="ordered locus">BS1330_I1239</name>
</gene>
<comment type="function">
    <text evidence="1">DNA-dependent RNA polymerase catalyzes the transcription of DNA into RNA using the four ribonucleoside triphosphates as substrates.</text>
</comment>
<comment type="catalytic activity">
    <reaction evidence="1">
        <text>RNA(n) + a ribonucleoside 5'-triphosphate = RNA(n+1) + diphosphate</text>
        <dbReference type="Rhea" id="RHEA:21248"/>
        <dbReference type="Rhea" id="RHEA-COMP:14527"/>
        <dbReference type="Rhea" id="RHEA-COMP:17342"/>
        <dbReference type="ChEBI" id="CHEBI:33019"/>
        <dbReference type="ChEBI" id="CHEBI:61557"/>
        <dbReference type="ChEBI" id="CHEBI:140395"/>
        <dbReference type="EC" id="2.7.7.6"/>
    </reaction>
</comment>
<comment type="subunit">
    <text evidence="1">The RNAP catalytic core consists of 2 alpha, 1 beta, 1 beta' and 1 omega subunit. When a sigma factor is associated with the core the holoenzyme is formed, which can initiate transcription.</text>
</comment>
<comment type="similarity">
    <text evidence="1">Belongs to the RNA polymerase beta chain family.</text>
</comment>
<name>RPOB_BRUSU</name>
<reference key="1">
    <citation type="journal article" date="2002" name="Proc. Natl. Acad. Sci. U.S.A.">
        <title>The Brucella suis genome reveals fundamental similarities between animal and plant pathogens and symbionts.</title>
        <authorList>
            <person name="Paulsen I.T."/>
            <person name="Seshadri R."/>
            <person name="Nelson K.E."/>
            <person name="Eisen J.A."/>
            <person name="Heidelberg J.F."/>
            <person name="Read T.D."/>
            <person name="Dodson R.J."/>
            <person name="Umayam L.A."/>
            <person name="Brinkac L.M."/>
            <person name="Beanan M.J."/>
            <person name="Daugherty S.C."/>
            <person name="DeBoy R.T."/>
            <person name="Durkin A.S."/>
            <person name="Kolonay J.F."/>
            <person name="Madupu R."/>
            <person name="Nelson W.C."/>
            <person name="Ayodeji B."/>
            <person name="Kraul M."/>
            <person name="Shetty J."/>
            <person name="Malek J.A."/>
            <person name="Van Aken S.E."/>
            <person name="Riedmuller S."/>
            <person name="Tettelin H."/>
            <person name="Gill S.R."/>
            <person name="White O."/>
            <person name="Salzberg S.L."/>
            <person name="Hoover D.L."/>
            <person name="Lindler L.E."/>
            <person name="Halling S.M."/>
            <person name="Boyle S.M."/>
            <person name="Fraser C.M."/>
        </authorList>
    </citation>
    <scope>NUCLEOTIDE SEQUENCE [LARGE SCALE GENOMIC DNA]</scope>
    <source>
        <strain>1330</strain>
    </source>
</reference>
<reference key="2">
    <citation type="journal article" date="2011" name="J. Bacteriol.">
        <title>Revised genome sequence of Brucella suis 1330.</title>
        <authorList>
            <person name="Tae H."/>
            <person name="Shallom S."/>
            <person name="Settlage R."/>
            <person name="Preston D."/>
            <person name="Adams L.G."/>
            <person name="Garner H.R."/>
        </authorList>
    </citation>
    <scope>NUCLEOTIDE SEQUENCE [LARGE SCALE GENOMIC DNA]</scope>
    <source>
        <strain>1330</strain>
    </source>
</reference>
<accession>Q8G069</accession>
<accession>G0KAG4</accession>
<sequence>MAQTHSFNGRKRVRKFFGKIPEVAEMPNLIEVQKASYDQFLMVEEPSGGRPDEGLQAVFKSVFPIQDFSGASMLEFVRYEFDPPKFDVDECRQRDLTYSAPLKVTLRLIVFDIDEDTGAKSIKDIKEQDVYMGDMPLMTDNGTFIVNGTERVIVSQMHRSPGVFFDHDKGKTHSSGKLLFAARVIPYRGSWLDIEFDSKDIVYARIDRRRKLPATTLLMALGMDGEEILSTFYKTVTYTRDGDNWRIPYSAERFKGMKIISDLVDADTGEAVLEAGKKLTARAAKQLAEKGLKAIKATEDDLFGSYLAEDVVNYATGEIYLEAGDEIDEKVLKTLIDTGETEINVLDIDHVNIGAYIRNTLAVDKNESRQEALFDIYRVMRPGEPPTMDSAEAMFHSLFFDSERYDLSAVGRVKMNMRLDLDAEDTVRVLRKEDILAVVKMLVELRDGRGEIDDIDNLGNRRVRSVGELMENQYRVGLLRMERAIKERMSSIEIDTVMPQDLINAKPAAAAVREFFGSSQLSQFMDQTNPLSEITHKRRLSALGPGGLTRERAGFEVRDVHPTHYGRICPIETPEGPNIGLINSLATFARVNKYGFIESPYRKVVDGKVTNDVVYLSAMEEAKHSVAQANVELDEQGGFVDEFVICRHAGEVMMAPRENVDLMDVSPKQLVSVAAALIPFLENDDANRALMGSNMQRQAVPLVRAEAPFVGTGMEPIVARDSGAAIAARRGGIVDQVDATRIVIRATEELDPSKSGVDIYRLQKFQRSNQSTCINQRPLVRVGDRIHKGDIIADGPSTDLGDLALGRNVLVAFMPWNGYNYEDSILLSEKIVSDDVFTSIHIEEFEVAARDTKLGPEEITRDIPNVSEEALKNLDEAGIVYIGAEVHPGDILVGKITPKGESPMTPEEKLLRAIFGEKASDVRDTSMRMPPGTYGTVVEVRVFNRHGVEKDERAMAIEREEIERLAKDRDDEQAILDRNVYGRLADMIDGKVAAAGPKGFKKGTTITRELMTEYPRSQWWQFAVEDEKLQGELEALRSQYDDSKKLLEARFMDKVEKVQRGDEMPPGVMKMVKVFVAVKRKIQPGDKMAGRHGNKGVVSRILPVEDMPFLEDGTHADIVLNPLGVPSRMNVGQILETHLGWACAGMGKKIGELLDVYRKTANIEPLRQTLEHIYPDNDRNEPVRSYDDDAILMLANQVKRGVSIATPVFDGAVEADINAMLTDAGLATSGQSTLYDGRTGEPFDRQVTMGYIYMLKLHHLVDDKIHARSIGPYSLVTQQPLGGKAQFGGQRFGEMEVWALEAYGAAYTLQEMLTVKSDDVAGRTKVYEAIVRGDDTFEAGIPESFNVLVKEMRSLGLNVELDDTREAEQPALPDAAE</sequence>
<evidence type="ECO:0000255" key="1">
    <source>
        <dbReference type="HAMAP-Rule" id="MF_01321"/>
    </source>
</evidence>
<dbReference type="EC" id="2.7.7.6" evidence="1"/>
<dbReference type="EMBL" id="AE014291">
    <property type="protein sequence ID" value="AAN30162.1"/>
    <property type="molecule type" value="Genomic_DNA"/>
</dbReference>
<dbReference type="EMBL" id="CP002997">
    <property type="protein sequence ID" value="AEM18580.1"/>
    <property type="molecule type" value="Genomic_DNA"/>
</dbReference>
<dbReference type="RefSeq" id="WP_006190505.1">
    <property type="nucleotide sequence ID" value="NZ_KN046804.1"/>
</dbReference>
<dbReference type="SMR" id="Q8G069"/>
<dbReference type="GeneID" id="45052276"/>
<dbReference type="KEGG" id="bms:BR1243"/>
<dbReference type="KEGG" id="bsi:BS1330_I1239"/>
<dbReference type="PATRIC" id="fig|204722.21.peg.3399"/>
<dbReference type="HOGENOM" id="CLU_000524_4_0_5"/>
<dbReference type="PhylomeDB" id="Q8G069"/>
<dbReference type="PRO" id="PR:Q8G069"/>
<dbReference type="Proteomes" id="UP000007104">
    <property type="component" value="Chromosome I"/>
</dbReference>
<dbReference type="GO" id="GO:0000428">
    <property type="term" value="C:DNA-directed RNA polymerase complex"/>
    <property type="evidence" value="ECO:0007669"/>
    <property type="project" value="UniProtKB-KW"/>
</dbReference>
<dbReference type="GO" id="GO:0003677">
    <property type="term" value="F:DNA binding"/>
    <property type="evidence" value="ECO:0007669"/>
    <property type="project" value="UniProtKB-UniRule"/>
</dbReference>
<dbReference type="GO" id="GO:0003899">
    <property type="term" value="F:DNA-directed RNA polymerase activity"/>
    <property type="evidence" value="ECO:0007669"/>
    <property type="project" value="UniProtKB-UniRule"/>
</dbReference>
<dbReference type="GO" id="GO:0032549">
    <property type="term" value="F:ribonucleoside binding"/>
    <property type="evidence" value="ECO:0007669"/>
    <property type="project" value="InterPro"/>
</dbReference>
<dbReference type="GO" id="GO:0006351">
    <property type="term" value="P:DNA-templated transcription"/>
    <property type="evidence" value="ECO:0007669"/>
    <property type="project" value="UniProtKB-UniRule"/>
</dbReference>
<dbReference type="CDD" id="cd00653">
    <property type="entry name" value="RNA_pol_B_RPB2"/>
    <property type="match status" value="1"/>
</dbReference>
<dbReference type="FunFam" id="2.40.50.100:FF:000006">
    <property type="entry name" value="DNA-directed RNA polymerase subunit beta"/>
    <property type="match status" value="1"/>
</dbReference>
<dbReference type="FunFam" id="3.90.1800.10:FF:000001">
    <property type="entry name" value="DNA-directed RNA polymerase subunit beta"/>
    <property type="match status" value="1"/>
</dbReference>
<dbReference type="Gene3D" id="2.40.50.100">
    <property type="match status" value="1"/>
</dbReference>
<dbReference type="Gene3D" id="2.40.50.150">
    <property type="match status" value="1"/>
</dbReference>
<dbReference type="Gene3D" id="3.90.1100.10">
    <property type="match status" value="2"/>
</dbReference>
<dbReference type="Gene3D" id="2.30.150.10">
    <property type="entry name" value="DNA-directed RNA polymerase, beta subunit, external 1 domain"/>
    <property type="match status" value="1"/>
</dbReference>
<dbReference type="Gene3D" id="2.40.270.10">
    <property type="entry name" value="DNA-directed RNA polymerase, subunit 2, domain 6"/>
    <property type="match status" value="1"/>
</dbReference>
<dbReference type="Gene3D" id="3.90.1800.10">
    <property type="entry name" value="RNA polymerase alpha subunit dimerisation domain"/>
    <property type="match status" value="1"/>
</dbReference>
<dbReference type="Gene3D" id="3.90.1110.10">
    <property type="entry name" value="RNA polymerase Rpb2, domain 2"/>
    <property type="match status" value="1"/>
</dbReference>
<dbReference type="HAMAP" id="MF_01321">
    <property type="entry name" value="RNApol_bact_RpoB"/>
    <property type="match status" value="1"/>
</dbReference>
<dbReference type="InterPro" id="IPR042107">
    <property type="entry name" value="DNA-dir_RNA_pol_bsu_ext_1_sf"/>
</dbReference>
<dbReference type="InterPro" id="IPR019462">
    <property type="entry name" value="DNA-dir_RNA_pol_bsu_external_1"/>
</dbReference>
<dbReference type="InterPro" id="IPR015712">
    <property type="entry name" value="DNA-dir_RNA_pol_su2"/>
</dbReference>
<dbReference type="InterPro" id="IPR007120">
    <property type="entry name" value="DNA-dir_RNAP_su2_dom"/>
</dbReference>
<dbReference type="InterPro" id="IPR037033">
    <property type="entry name" value="DNA-dir_RNAP_su2_hyb_sf"/>
</dbReference>
<dbReference type="InterPro" id="IPR010243">
    <property type="entry name" value="RNA_pol_bsu_bac"/>
</dbReference>
<dbReference type="InterPro" id="IPR007121">
    <property type="entry name" value="RNA_pol_bsu_CS"/>
</dbReference>
<dbReference type="InterPro" id="IPR007644">
    <property type="entry name" value="RNA_pol_bsu_protrusion"/>
</dbReference>
<dbReference type="InterPro" id="IPR007642">
    <property type="entry name" value="RNA_pol_Rpb2_2"/>
</dbReference>
<dbReference type="InterPro" id="IPR037034">
    <property type="entry name" value="RNA_pol_Rpb2_2_sf"/>
</dbReference>
<dbReference type="InterPro" id="IPR007645">
    <property type="entry name" value="RNA_pol_Rpb2_3"/>
</dbReference>
<dbReference type="InterPro" id="IPR007641">
    <property type="entry name" value="RNA_pol_Rpb2_7"/>
</dbReference>
<dbReference type="InterPro" id="IPR014724">
    <property type="entry name" value="RNA_pol_RPB2_OB-fold"/>
</dbReference>
<dbReference type="NCBIfam" id="NF001616">
    <property type="entry name" value="PRK00405.1"/>
    <property type="match status" value="1"/>
</dbReference>
<dbReference type="NCBIfam" id="TIGR02013">
    <property type="entry name" value="rpoB"/>
    <property type="match status" value="1"/>
</dbReference>
<dbReference type="PANTHER" id="PTHR20856">
    <property type="entry name" value="DNA-DIRECTED RNA POLYMERASE I SUBUNIT 2"/>
    <property type="match status" value="1"/>
</dbReference>
<dbReference type="Pfam" id="PF04563">
    <property type="entry name" value="RNA_pol_Rpb2_1"/>
    <property type="match status" value="1"/>
</dbReference>
<dbReference type="Pfam" id="PF04561">
    <property type="entry name" value="RNA_pol_Rpb2_2"/>
    <property type="match status" value="2"/>
</dbReference>
<dbReference type="Pfam" id="PF04565">
    <property type="entry name" value="RNA_pol_Rpb2_3"/>
    <property type="match status" value="1"/>
</dbReference>
<dbReference type="Pfam" id="PF10385">
    <property type="entry name" value="RNA_pol_Rpb2_45"/>
    <property type="match status" value="1"/>
</dbReference>
<dbReference type="Pfam" id="PF00562">
    <property type="entry name" value="RNA_pol_Rpb2_6"/>
    <property type="match status" value="1"/>
</dbReference>
<dbReference type="Pfam" id="PF04560">
    <property type="entry name" value="RNA_pol_Rpb2_7"/>
    <property type="match status" value="1"/>
</dbReference>
<dbReference type="SUPFAM" id="SSF64484">
    <property type="entry name" value="beta and beta-prime subunits of DNA dependent RNA-polymerase"/>
    <property type="match status" value="1"/>
</dbReference>
<dbReference type="PROSITE" id="PS01166">
    <property type="entry name" value="RNA_POL_BETA"/>
    <property type="match status" value="1"/>
</dbReference>